<organism>
    <name type="scientific">Streptococcus agalactiae serotype V (strain ATCC BAA-611 / 2603 V/R)</name>
    <dbReference type="NCBI Taxonomy" id="208435"/>
    <lineage>
        <taxon>Bacteria</taxon>
        <taxon>Bacillati</taxon>
        <taxon>Bacillota</taxon>
        <taxon>Bacilli</taxon>
        <taxon>Lactobacillales</taxon>
        <taxon>Streptococcaceae</taxon>
        <taxon>Streptococcus</taxon>
    </lineage>
</organism>
<dbReference type="EMBL" id="AE009948">
    <property type="protein sequence ID" value="AAM99921.1"/>
    <property type="molecule type" value="Genomic_DNA"/>
</dbReference>
<dbReference type="RefSeq" id="NP_688049.1">
    <property type="nucleotide sequence ID" value="NC_004116.1"/>
</dbReference>
<dbReference type="RefSeq" id="WP_000057251.1">
    <property type="nucleotide sequence ID" value="NC_004116.1"/>
</dbReference>
<dbReference type="PDB" id="3GVM">
    <property type="method" value="X-ray"/>
    <property type="resolution" value="2.15 A"/>
    <property type="chains" value="A/B/C/D=3-96"/>
</dbReference>
<dbReference type="PDB" id="3GWK">
    <property type="method" value="X-ray"/>
    <property type="resolution" value="1.30 A"/>
    <property type="chains" value="C/E=3-96"/>
</dbReference>
<dbReference type="PDBsum" id="3GVM"/>
<dbReference type="PDBsum" id="3GWK"/>
<dbReference type="SMR" id="Q8DZR0"/>
<dbReference type="STRING" id="208435.SAG1039"/>
<dbReference type="KEGG" id="sag:SAG1039"/>
<dbReference type="PATRIC" id="fig|208435.3.peg.1050"/>
<dbReference type="HOGENOM" id="CLU_158563_4_0_9"/>
<dbReference type="OrthoDB" id="4978934at2"/>
<dbReference type="EvolutionaryTrace" id="Q8DZR0"/>
<dbReference type="Proteomes" id="UP000000821">
    <property type="component" value="Chromosome"/>
</dbReference>
<dbReference type="Gene3D" id="1.10.287.1060">
    <property type="entry name" value="ESAT-6-like"/>
    <property type="match status" value="1"/>
</dbReference>
<dbReference type="InterPro" id="IPR036689">
    <property type="entry name" value="ESAT-6-like_sf"/>
</dbReference>
<dbReference type="InterPro" id="IPR010310">
    <property type="entry name" value="T7SS_ESAT-6-like"/>
</dbReference>
<dbReference type="NCBIfam" id="TIGR03930">
    <property type="entry name" value="WXG100_ESAT6"/>
    <property type="match status" value="1"/>
</dbReference>
<dbReference type="Pfam" id="PF06013">
    <property type="entry name" value="WXG100"/>
    <property type="match status" value="1"/>
</dbReference>
<dbReference type="SUPFAM" id="SSF140453">
    <property type="entry name" value="EsxAB dimer-like"/>
    <property type="match status" value="1"/>
</dbReference>
<keyword id="KW-0002">3D-structure</keyword>
<keyword id="KW-1185">Reference proteome</keyword>
<reference key="1">
    <citation type="journal article" date="2002" name="Proc. Natl. Acad. Sci. U.S.A.">
        <title>Complete genome sequence and comparative genomic analysis of an emerging human pathogen, serotype V Streptococcus agalactiae.</title>
        <authorList>
            <person name="Tettelin H."/>
            <person name="Masignani V."/>
            <person name="Cieslewicz M.J."/>
            <person name="Eisen J.A."/>
            <person name="Peterson S.N."/>
            <person name="Wessels M.R."/>
            <person name="Paulsen I.T."/>
            <person name="Nelson K.E."/>
            <person name="Margarit I."/>
            <person name="Read T.D."/>
            <person name="Madoff L.C."/>
            <person name="Wolf A.M."/>
            <person name="Beanan M.J."/>
            <person name="Brinkac L.M."/>
            <person name="Daugherty S.C."/>
            <person name="DeBoy R.T."/>
            <person name="Durkin A.S."/>
            <person name="Kolonay J.F."/>
            <person name="Madupu R."/>
            <person name="Lewis M.R."/>
            <person name="Radune D."/>
            <person name="Fedorova N.B."/>
            <person name="Scanlan D."/>
            <person name="Khouri H.M."/>
            <person name="Mulligan S."/>
            <person name="Carty H.A."/>
            <person name="Cline R.T."/>
            <person name="Van Aken S.E."/>
            <person name="Gill J."/>
            <person name="Scarselli M."/>
            <person name="Mora M."/>
            <person name="Iacobini E.T."/>
            <person name="Brettoni C."/>
            <person name="Galli G."/>
            <person name="Mariani M."/>
            <person name="Vegni F."/>
            <person name="Maione D."/>
            <person name="Rinaudo D."/>
            <person name="Rappuoli R."/>
            <person name="Telford J.L."/>
            <person name="Kasper D.L."/>
            <person name="Grandi G."/>
            <person name="Fraser C.M."/>
        </authorList>
    </citation>
    <scope>NUCLEOTIDE SEQUENCE [LARGE SCALE GENOMIC DNA]</scope>
    <source>
        <strain>ATCC BAA-611 / 2603 V/R</strain>
    </source>
</reference>
<reference key="2">
    <citation type="journal article" date="2014" name="PLoS ONE">
        <title>WXG100 protein superfamily consists of three subfamilies and exhibits an alpha-helical C-terminal conserved residue pattern.</title>
        <authorList>
            <person name="Poulsen C."/>
            <person name="Panjikar S."/>
            <person name="Holton S.J."/>
            <person name="Wilmanns M."/>
            <person name="Song Y.H."/>
        </authorList>
    </citation>
    <scope>X-RAY CRYSTALLOGRAPHY (1.30 ANGSTROMS) OF 3-96</scope>
    <scope>SUBUNIT</scope>
    <source>
        <strain>ATCC BAA-611 / 2603 V/R</strain>
    </source>
</reference>
<sequence>MAQIKLTPEELRSSAQKYTAGSQQVTEVLNLLTQEQAVIDENWDGSTFDSFEAQFNELSPKITEFAQLLEDINQQLLKVADIIEQTDADIASQISG</sequence>
<name>ESX2_STRA5</name>
<comment type="subunit">
    <text evidence="1">Homodimer (PubMed:24586681).</text>
</comment>
<comment type="similarity">
    <text evidence="3">Belongs to the WXG100 family. sagEsxA-like subfamily.</text>
</comment>
<protein>
    <recommendedName>
        <fullName evidence="2">ESAT-6-like protein SAG1039</fullName>
    </recommendedName>
</protein>
<proteinExistence type="evidence at protein level"/>
<gene>
    <name type="ordered locus">SAG1039</name>
</gene>
<feature type="chain" id="PRO_0000437935" description="ESAT-6-like protein SAG1039">
    <location>
        <begin position="1"/>
        <end position="96"/>
    </location>
</feature>
<feature type="helix" evidence="4">
    <location>
        <begin position="8"/>
        <end position="42"/>
    </location>
</feature>
<feature type="helix" evidence="4">
    <location>
        <begin position="49"/>
        <end position="93"/>
    </location>
</feature>
<evidence type="ECO:0000269" key="1">
    <source>
    </source>
</evidence>
<evidence type="ECO:0000305" key="2"/>
<evidence type="ECO:0000305" key="3">
    <source>
    </source>
</evidence>
<evidence type="ECO:0007829" key="4">
    <source>
        <dbReference type="PDB" id="3GWK"/>
    </source>
</evidence>
<accession>Q8DZR0</accession>